<keyword id="KW-0963">Cytoplasm</keyword>
<keyword id="KW-0448">Lipopolysaccharide biosynthesis</keyword>
<keyword id="KW-0808">Transferase</keyword>
<comment type="catalytic activity">
    <reaction evidence="1">
        <text>D-arabinose 5-phosphate + phosphoenolpyruvate + H2O = 3-deoxy-alpha-D-manno-2-octulosonate-8-phosphate + phosphate</text>
        <dbReference type="Rhea" id="RHEA:14053"/>
        <dbReference type="ChEBI" id="CHEBI:15377"/>
        <dbReference type="ChEBI" id="CHEBI:43474"/>
        <dbReference type="ChEBI" id="CHEBI:57693"/>
        <dbReference type="ChEBI" id="CHEBI:58702"/>
        <dbReference type="ChEBI" id="CHEBI:85985"/>
        <dbReference type="EC" id="2.5.1.55"/>
    </reaction>
</comment>
<comment type="pathway">
    <text evidence="1">Carbohydrate biosynthesis; 3-deoxy-D-manno-octulosonate biosynthesis; 3-deoxy-D-manno-octulosonate from D-ribulose 5-phosphate: step 2/3.</text>
</comment>
<comment type="pathway">
    <text evidence="1">Bacterial outer membrane biogenesis; lipopolysaccharide biosynthesis.</text>
</comment>
<comment type="subcellular location">
    <subcellularLocation>
        <location evidence="1">Cytoplasm</location>
    </subcellularLocation>
</comment>
<comment type="similarity">
    <text evidence="1">Belongs to the KdsA family.</text>
</comment>
<sequence length="284" mass="30891">MQNKIVKIGNIDVANDKPFVLFGGMNVLESRDMAMQVCEAYVKVTEKLGVPYVFKASFDKANRSSIHSYRGPGMEEGLKIFQELKDTFGVKIITDVHEIYQCQPVADVVDIIQLPAFLARQTDLVEAMAKTGAVINVKKPQFLSPGQMGNIVEKIEECGNDKIILCDRGTNFGYDNLIVDMLGFSVMKKASKGSPVIFDVTHSLQCRDPFGAASSGRRAQVTELARSGLAVGIAGLFLEAHPNPNQAKCDGPSALPLSALEGFVSQMKAIDDLVKSFPELDTSI</sequence>
<feature type="chain" id="PRO_0000304452" description="2-dehydro-3-deoxyphosphooctonate aldolase">
    <location>
        <begin position="1"/>
        <end position="284"/>
    </location>
</feature>
<evidence type="ECO:0000255" key="1">
    <source>
        <dbReference type="HAMAP-Rule" id="MF_00056"/>
    </source>
</evidence>
<reference key="1">
    <citation type="journal article" date="2005" name="J. Bacteriol.">
        <title>Genomic sequence of an otitis media isolate of nontypeable Haemophilus influenzae: comparative study with H. influenzae serotype d, strain KW20.</title>
        <authorList>
            <person name="Harrison A."/>
            <person name="Dyer D.W."/>
            <person name="Gillaspy A."/>
            <person name="Ray W.C."/>
            <person name="Mungur R."/>
            <person name="Carson M.B."/>
            <person name="Zhong H."/>
            <person name="Gipson J."/>
            <person name="Gipson M."/>
            <person name="Johnson L.S."/>
            <person name="Lewis L."/>
            <person name="Bakaletz L.O."/>
            <person name="Munson R.S. Jr."/>
        </authorList>
    </citation>
    <scope>NUCLEOTIDE SEQUENCE [LARGE SCALE GENOMIC DNA]</scope>
    <source>
        <strain>86-028NP</strain>
    </source>
</reference>
<proteinExistence type="inferred from homology"/>
<accession>Q4QKR7</accession>
<name>KDSA_HAEI8</name>
<gene>
    <name evidence="1" type="primary">kdsA</name>
    <name type="ordered locus">NTHI1576</name>
</gene>
<dbReference type="EC" id="2.5.1.55" evidence="1"/>
<dbReference type="EMBL" id="CP000057">
    <property type="protein sequence ID" value="AAX88380.1"/>
    <property type="molecule type" value="Genomic_DNA"/>
</dbReference>
<dbReference type="RefSeq" id="WP_005654784.1">
    <property type="nucleotide sequence ID" value="NC_007146.2"/>
</dbReference>
<dbReference type="SMR" id="Q4QKR7"/>
<dbReference type="GeneID" id="93220315"/>
<dbReference type="KEGG" id="hit:NTHI1576"/>
<dbReference type="HOGENOM" id="CLU_036666_0_0_6"/>
<dbReference type="UniPathway" id="UPA00030"/>
<dbReference type="UniPathway" id="UPA00357">
    <property type="reaction ID" value="UER00474"/>
</dbReference>
<dbReference type="Proteomes" id="UP000002525">
    <property type="component" value="Chromosome"/>
</dbReference>
<dbReference type="GO" id="GO:0005737">
    <property type="term" value="C:cytoplasm"/>
    <property type="evidence" value="ECO:0007669"/>
    <property type="project" value="UniProtKB-SubCell"/>
</dbReference>
<dbReference type="GO" id="GO:0008676">
    <property type="term" value="F:3-deoxy-8-phosphooctulonate synthase activity"/>
    <property type="evidence" value="ECO:0007669"/>
    <property type="project" value="UniProtKB-UniRule"/>
</dbReference>
<dbReference type="GO" id="GO:0019294">
    <property type="term" value="P:keto-3-deoxy-D-manno-octulosonic acid biosynthetic process"/>
    <property type="evidence" value="ECO:0007669"/>
    <property type="project" value="UniProtKB-UniRule"/>
</dbReference>
<dbReference type="FunFam" id="3.20.20.70:FF:000058">
    <property type="entry name" value="2-dehydro-3-deoxyphosphooctonate aldolase"/>
    <property type="match status" value="1"/>
</dbReference>
<dbReference type="Gene3D" id="3.20.20.70">
    <property type="entry name" value="Aldolase class I"/>
    <property type="match status" value="1"/>
</dbReference>
<dbReference type="HAMAP" id="MF_00056">
    <property type="entry name" value="KDO8P_synth"/>
    <property type="match status" value="1"/>
</dbReference>
<dbReference type="InterPro" id="IPR013785">
    <property type="entry name" value="Aldolase_TIM"/>
</dbReference>
<dbReference type="InterPro" id="IPR006218">
    <property type="entry name" value="DAHP1/KDSA"/>
</dbReference>
<dbReference type="InterPro" id="IPR006269">
    <property type="entry name" value="KDO8P_synthase"/>
</dbReference>
<dbReference type="NCBIfam" id="TIGR01362">
    <property type="entry name" value="KDO8P_synth"/>
    <property type="match status" value="1"/>
</dbReference>
<dbReference type="NCBIfam" id="NF003543">
    <property type="entry name" value="PRK05198.1"/>
    <property type="match status" value="1"/>
</dbReference>
<dbReference type="NCBIfam" id="NF009109">
    <property type="entry name" value="PRK12457.1"/>
    <property type="match status" value="1"/>
</dbReference>
<dbReference type="PANTHER" id="PTHR21057">
    <property type="entry name" value="PHOSPHO-2-DEHYDRO-3-DEOXYHEPTONATE ALDOLASE"/>
    <property type="match status" value="1"/>
</dbReference>
<dbReference type="Pfam" id="PF00793">
    <property type="entry name" value="DAHP_synth_1"/>
    <property type="match status" value="1"/>
</dbReference>
<dbReference type="SUPFAM" id="SSF51569">
    <property type="entry name" value="Aldolase"/>
    <property type="match status" value="1"/>
</dbReference>
<protein>
    <recommendedName>
        <fullName evidence="1">2-dehydro-3-deoxyphosphooctonate aldolase</fullName>
        <ecNumber evidence="1">2.5.1.55</ecNumber>
    </recommendedName>
    <alternativeName>
        <fullName evidence="1">3-deoxy-D-manno-octulosonic acid 8-phosphate synthase</fullName>
    </alternativeName>
    <alternativeName>
        <fullName evidence="1">KDO-8-phosphate synthase</fullName>
        <shortName evidence="1">KDO 8-P synthase</shortName>
        <shortName evidence="1">KDOPS</shortName>
    </alternativeName>
    <alternativeName>
        <fullName evidence="1">Phospho-2-dehydro-3-deoxyoctonate aldolase</fullName>
    </alternativeName>
</protein>
<organism>
    <name type="scientific">Haemophilus influenzae (strain 86-028NP)</name>
    <dbReference type="NCBI Taxonomy" id="281310"/>
    <lineage>
        <taxon>Bacteria</taxon>
        <taxon>Pseudomonadati</taxon>
        <taxon>Pseudomonadota</taxon>
        <taxon>Gammaproteobacteria</taxon>
        <taxon>Pasteurellales</taxon>
        <taxon>Pasteurellaceae</taxon>
        <taxon>Haemophilus</taxon>
    </lineage>
</organism>